<evidence type="ECO:0000255" key="1">
    <source>
        <dbReference type="HAMAP-Rule" id="MF_01320"/>
    </source>
</evidence>
<evidence type="ECO:0000256" key="2">
    <source>
        <dbReference type="SAM" id="MobiDB-lite"/>
    </source>
</evidence>
<evidence type="ECO:0000305" key="3"/>
<sequence>MGHRITTQNRGRGGPTYRAPSHRYKAALKHIGDGTKSISGSIIDIEHDPARNAPIALVQLEDGSKVYILVTEGIGIGETVAWGADVKVKNGNTLPLQSIPTGSYICNIESRPNDGGKFVRSTGVQAVVVDKIGDRIGVRMPSGKTKWFNARCRATVGIVAGGGRVEKPFVKAGNKSHKMRNTASNWPRVRGVAMNVIDHPFGGGGHQHPGRPKTIARGTSPGRTVGHVAARQTGRSRK</sequence>
<proteinExistence type="inferred from homology"/>
<feature type="chain" id="PRO_0000310052" description="Large ribosomal subunit protein uL2">
    <location>
        <begin position="1"/>
        <end position="238"/>
    </location>
</feature>
<feature type="region of interest" description="Disordered" evidence="2">
    <location>
        <begin position="201"/>
        <end position="238"/>
    </location>
</feature>
<gene>
    <name evidence="1" type="primary">rpl2</name>
    <name type="ordered locus">Mboo_0535</name>
</gene>
<name>RL2_METB6</name>
<keyword id="KW-1185">Reference proteome</keyword>
<keyword id="KW-0687">Ribonucleoprotein</keyword>
<keyword id="KW-0689">Ribosomal protein</keyword>
<keyword id="KW-0694">RNA-binding</keyword>
<keyword id="KW-0699">rRNA-binding</keyword>
<organism>
    <name type="scientific">Methanoregula boonei (strain DSM 21154 / JCM 14090 / 6A8)</name>
    <dbReference type="NCBI Taxonomy" id="456442"/>
    <lineage>
        <taxon>Archaea</taxon>
        <taxon>Methanobacteriati</taxon>
        <taxon>Methanobacteriota</taxon>
        <taxon>Stenosarchaea group</taxon>
        <taxon>Methanomicrobia</taxon>
        <taxon>Methanomicrobiales</taxon>
        <taxon>Methanoregulaceae</taxon>
        <taxon>Methanoregula</taxon>
    </lineage>
</organism>
<reference key="1">
    <citation type="journal article" date="2015" name="Microbiology">
        <title>Genome of Methanoregula boonei 6A8 reveals adaptations to oligotrophic peatland environments.</title>
        <authorList>
            <person name="Braeuer S."/>
            <person name="Cadillo-Quiroz H."/>
            <person name="Kyrpides N."/>
            <person name="Woyke T."/>
            <person name="Goodwin L."/>
            <person name="Detter C."/>
            <person name="Podell S."/>
            <person name="Yavitt J.B."/>
            <person name="Zinder S.H."/>
        </authorList>
    </citation>
    <scope>NUCLEOTIDE SEQUENCE [LARGE SCALE GENOMIC DNA]</scope>
    <source>
        <strain>DSM 21154 / JCM 14090 / 6A8</strain>
    </source>
</reference>
<dbReference type="EMBL" id="CP000780">
    <property type="protein sequence ID" value="ABS55053.1"/>
    <property type="molecule type" value="Genomic_DNA"/>
</dbReference>
<dbReference type="RefSeq" id="WP_012106074.1">
    <property type="nucleotide sequence ID" value="NC_009712.1"/>
</dbReference>
<dbReference type="SMR" id="A7I5P2"/>
<dbReference type="STRING" id="456442.Mboo_0535"/>
<dbReference type="GeneID" id="5411762"/>
<dbReference type="KEGG" id="mbn:Mboo_0535"/>
<dbReference type="eggNOG" id="arCOG04067">
    <property type="taxonomic scope" value="Archaea"/>
</dbReference>
<dbReference type="HOGENOM" id="CLU_036235_0_1_2"/>
<dbReference type="OrthoDB" id="5987at2157"/>
<dbReference type="Proteomes" id="UP000002408">
    <property type="component" value="Chromosome"/>
</dbReference>
<dbReference type="GO" id="GO:0022625">
    <property type="term" value="C:cytosolic large ribosomal subunit"/>
    <property type="evidence" value="ECO:0007669"/>
    <property type="project" value="TreeGrafter"/>
</dbReference>
<dbReference type="GO" id="GO:0019843">
    <property type="term" value="F:rRNA binding"/>
    <property type="evidence" value="ECO:0007669"/>
    <property type="project" value="UniProtKB-UniRule"/>
</dbReference>
<dbReference type="GO" id="GO:0003735">
    <property type="term" value="F:structural constituent of ribosome"/>
    <property type="evidence" value="ECO:0007669"/>
    <property type="project" value="InterPro"/>
</dbReference>
<dbReference type="GO" id="GO:0002181">
    <property type="term" value="P:cytoplasmic translation"/>
    <property type="evidence" value="ECO:0007669"/>
    <property type="project" value="TreeGrafter"/>
</dbReference>
<dbReference type="FunFam" id="2.30.30.30:FF:000001">
    <property type="entry name" value="50S ribosomal protein L2"/>
    <property type="match status" value="1"/>
</dbReference>
<dbReference type="FunFam" id="4.10.950.10:FF:000002">
    <property type="entry name" value="60S ribosomal protein L2"/>
    <property type="match status" value="1"/>
</dbReference>
<dbReference type="Gene3D" id="2.30.30.30">
    <property type="match status" value="1"/>
</dbReference>
<dbReference type="Gene3D" id="2.40.50.140">
    <property type="entry name" value="Nucleic acid-binding proteins"/>
    <property type="match status" value="1"/>
</dbReference>
<dbReference type="Gene3D" id="4.10.950.10">
    <property type="entry name" value="Ribosomal protein L2, domain 3"/>
    <property type="match status" value="1"/>
</dbReference>
<dbReference type="HAMAP" id="MF_01320_A">
    <property type="entry name" value="Ribosomal_uL2_A"/>
    <property type="match status" value="1"/>
</dbReference>
<dbReference type="InterPro" id="IPR012340">
    <property type="entry name" value="NA-bd_OB-fold"/>
</dbReference>
<dbReference type="InterPro" id="IPR014722">
    <property type="entry name" value="Rib_uL2_dom2"/>
</dbReference>
<dbReference type="InterPro" id="IPR002171">
    <property type="entry name" value="Ribosomal_uL2"/>
</dbReference>
<dbReference type="InterPro" id="IPR023672">
    <property type="entry name" value="Ribosomal_uL2_arc_euk"/>
</dbReference>
<dbReference type="InterPro" id="IPR022669">
    <property type="entry name" value="Ribosomal_uL2_C"/>
</dbReference>
<dbReference type="InterPro" id="IPR014726">
    <property type="entry name" value="Ribosomal_uL2_dom3"/>
</dbReference>
<dbReference type="InterPro" id="IPR022666">
    <property type="entry name" value="Ribosomal_uL2_RNA-bd_dom"/>
</dbReference>
<dbReference type="InterPro" id="IPR008991">
    <property type="entry name" value="Translation_prot_SH3-like_sf"/>
</dbReference>
<dbReference type="NCBIfam" id="NF007180">
    <property type="entry name" value="PRK09612.1"/>
    <property type="match status" value="1"/>
</dbReference>
<dbReference type="PANTHER" id="PTHR13691:SF16">
    <property type="entry name" value="LARGE RIBOSOMAL SUBUNIT PROTEIN UL2"/>
    <property type="match status" value="1"/>
</dbReference>
<dbReference type="PANTHER" id="PTHR13691">
    <property type="entry name" value="RIBOSOMAL PROTEIN L2"/>
    <property type="match status" value="1"/>
</dbReference>
<dbReference type="Pfam" id="PF00181">
    <property type="entry name" value="Ribosomal_L2"/>
    <property type="match status" value="1"/>
</dbReference>
<dbReference type="Pfam" id="PF03947">
    <property type="entry name" value="Ribosomal_L2_C"/>
    <property type="match status" value="1"/>
</dbReference>
<dbReference type="PIRSF" id="PIRSF002158">
    <property type="entry name" value="Ribosomal_L2"/>
    <property type="match status" value="1"/>
</dbReference>
<dbReference type="SMART" id="SM01383">
    <property type="entry name" value="Ribosomal_L2"/>
    <property type="match status" value="1"/>
</dbReference>
<dbReference type="SMART" id="SM01382">
    <property type="entry name" value="Ribosomal_L2_C"/>
    <property type="match status" value="1"/>
</dbReference>
<dbReference type="SUPFAM" id="SSF50249">
    <property type="entry name" value="Nucleic acid-binding proteins"/>
    <property type="match status" value="1"/>
</dbReference>
<dbReference type="SUPFAM" id="SSF50104">
    <property type="entry name" value="Translation proteins SH3-like domain"/>
    <property type="match status" value="1"/>
</dbReference>
<accession>A7I5P2</accession>
<comment type="function">
    <text evidence="1">One of the primary rRNA binding proteins. Required for association of the 30S and 50S subunits to form the 70S ribosome, for tRNA binding and peptide bond formation. It has been suggested to have peptidyltransferase activity; this is somewhat controversial. Makes several contacts with the 16S rRNA in the 70S ribosome.</text>
</comment>
<comment type="subunit">
    <text evidence="1">Part of the 50S ribosomal subunit. Forms a bridge to the 30S subunit in the 70S ribosome.</text>
</comment>
<comment type="similarity">
    <text evidence="1">Belongs to the universal ribosomal protein uL2 family.</text>
</comment>
<protein>
    <recommendedName>
        <fullName evidence="1">Large ribosomal subunit protein uL2</fullName>
    </recommendedName>
    <alternativeName>
        <fullName evidence="3">50S ribosomal protein L2</fullName>
    </alternativeName>
</protein>